<dbReference type="EC" id="1.4.7.1"/>
<dbReference type="EMBL" id="AP006715">
    <property type="protein sequence ID" value="BAE92499.1"/>
    <property type="molecule type" value="Genomic_DNA"/>
</dbReference>
<dbReference type="RefSeq" id="YP_537056.1">
    <property type="nucleotide sequence ID" value="NC_007932.1"/>
</dbReference>
<dbReference type="SMR" id="Q1XDB2"/>
<dbReference type="GeneID" id="3978887"/>
<dbReference type="UniPathway" id="UPA00045"/>
<dbReference type="UniPathway" id="UPA00634">
    <property type="reaction ID" value="UER00691"/>
</dbReference>
<dbReference type="GO" id="GO:0009570">
    <property type="term" value="C:chloroplast stroma"/>
    <property type="evidence" value="ECO:0007669"/>
    <property type="project" value="UniProtKB-SubCell"/>
</dbReference>
<dbReference type="GO" id="GO:0051538">
    <property type="term" value="F:3 iron, 4 sulfur cluster binding"/>
    <property type="evidence" value="ECO:0007669"/>
    <property type="project" value="UniProtKB-KW"/>
</dbReference>
<dbReference type="GO" id="GO:0016041">
    <property type="term" value="F:glutamate synthase (ferredoxin) activity"/>
    <property type="evidence" value="ECO:0007669"/>
    <property type="project" value="UniProtKB-EC"/>
</dbReference>
<dbReference type="GO" id="GO:0046872">
    <property type="term" value="F:metal ion binding"/>
    <property type="evidence" value="ECO:0007669"/>
    <property type="project" value="UniProtKB-KW"/>
</dbReference>
<dbReference type="GO" id="GO:0019676">
    <property type="term" value="P:ammonia assimilation cycle"/>
    <property type="evidence" value="ECO:0007669"/>
    <property type="project" value="TreeGrafter"/>
</dbReference>
<dbReference type="GO" id="GO:0097054">
    <property type="term" value="P:L-glutamate biosynthetic process"/>
    <property type="evidence" value="ECO:0007669"/>
    <property type="project" value="UniProtKB-UniPathway"/>
</dbReference>
<dbReference type="CDD" id="cd00982">
    <property type="entry name" value="gltB_C"/>
    <property type="match status" value="1"/>
</dbReference>
<dbReference type="CDD" id="cd00713">
    <property type="entry name" value="GltS"/>
    <property type="match status" value="1"/>
</dbReference>
<dbReference type="CDD" id="cd02808">
    <property type="entry name" value="GltS_FMN"/>
    <property type="match status" value="1"/>
</dbReference>
<dbReference type="FunFam" id="3.20.20.70:FF:000084">
    <property type="entry name" value="Ferredoxin-dependent glutamate synthase, chloroplastic"/>
    <property type="match status" value="1"/>
</dbReference>
<dbReference type="FunFam" id="3.60.20.10:FF:000001">
    <property type="entry name" value="Glutamate synthase, large subunit"/>
    <property type="match status" value="1"/>
</dbReference>
<dbReference type="Gene3D" id="3.20.20.70">
    <property type="entry name" value="Aldolase class I"/>
    <property type="match status" value="2"/>
</dbReference>
<dbReference type="Gene3D" id="2.160.20.60">
    <property type="entry name" value="Glutamate synthase, alpha subunit, C-terminal domain"/>
    <property type="match status" value="1"/>
</dbReference>
<dbReference type="Gene3D" id="3.60.20.10">
    <property type="entry name" value="Glutamine Phosphoribosylpyrophosphate, subunit 1, domain 1"/>
    <property type="match status" value="1"/>
</dbReference>
<dbReference type="InterPro" id="IPR013785">
    <property type="entry name" value="Aldolase_TIM"/>
</dbReference>
<dbReference type="InterPro" id="IPR050711">
    <property type="entry name" value="ET-N_metabolism_enzyme"/>
</dbReference>
<dbReference type="InterPro" id="IPR017932">
    <property type="entry name" value="GATase_2_dom"/>
</dbReference>
<dbReference type="InterPro" id="IPR002489">
    <property type="entry name" value="Glu_synth_asu_C"/>
</dbReference>
<dbReference type="InterPro" id="IPR036485">
    <property type="entry name" value="Glu_synth_asu_C_sf"/>
</dbReference>
<dbReference type="InterPro" id="IPR006982">
    <property type="entry name" value="Glu_synth_centr_N"/>
</dbReference>
<dbReference type="InterPro" id="IPR002932">
    <property type="entry name" value="Glu_synthdom"/>
</dbReference>
<dbReference type="InterPro" id="IPR029055">
    <property type="entry name" value="Ntn_hydrolases_N"/>
</dbReference>
<dbReference type="NCBIfam" id="NF008730">
    <property type="entry name" value="PRK11750.1"/>
    <property type="match status" value="1"/>
</dbReference>
<dbReference type="PANTHER" id="PTHR11938">
    <property type="entry name" value="FAD NADPH DEHYDROGENASE/OXIDOREDUCTASE"/>
    <property type="match status" value="1"/>
</dbReference>
<dbReference type="PANTHER" id="PTHR11938:SF133">
    <property type="entry name" value="GLUTAMATE SYNTHASE (NADH)"/>
    <property type="match status" value="1"/>
</dbReference>
<dbReference type="Pfam" id="PF00310">
    <property type="entry name" value="GATase_2"/>
    <property type="match status" value="1"/>
</dbReference>
<dbReference type="Pfam" id="PF04898">
    <property type="entry name" value="Glu_syn_central"/>
    <property type="match status" value="1"/>
</dbReference>
<dbReference type="Pfam" id="PF01645">
    <property type="entry name" value="Glu_synthase"/>
    <property type="match status" value="1"/>
</dbReference>
<dbReference type="Pfam" id="PF01493">
    <property type="entry name" value="GXGXG"/>
    <property type="match status" value="1"/>
</dbReference>
<dbReference type="SUPFAM" id="SSF69336">
    <property type="entry name" value="Alpha subunit of glutamate synthase, C-terminal domain"/>
    <property type="match status" value="1"/>
</dbReference>
<dbReference type="SUPFAM" id="SSF51395">
    <property type="entry name" value="FMN-linked oxidoreductases"/>
    <property type="match status" value="1"/>
</dbReference>
<dbReference type="SUPFAM" id="SSF56235">
    <property type="entry name" value="N-terminal nucleophile aminohydrolases (Ntn hydrolases)"/>
    <property type="match status" value="1"/>
</dbReference>
<dbReference type="PROSITE" id="PS51278">
    <property type="entry name" value="GATASE_TYPE_2"/>
    <property type="match status" value="1"/>
</dbReference>
<keyword id="KW-0003">3Fe-4S</keyword>
<keyword id="KW-0028">Amino-acid biosynthesis</keyword>
<keyword id="KW-0150">Chloroplast</keyword>
<keyword id="KW-0274">FAD</keyword>
<keyword id="KW-0285">Flavoprotein</keyword>
<keyword id="KW-0288">FMN</keyword>
<keyword id="KW-0314">Glutamate biosynthesis</keyword>
<keyword id="KW-0315">Glutamine amidotransferase</keyword>
<keyword id="KW-0408">Iron</keyword>
<keyword id="KW-0411">Iron-sulfur</keyword>
<keyword id="KW-0479">Metal-binding</keyword>
<keyword id="KW-0560">Oxidoreductase</keyword>
<keyword id="KW-0934">Plastid</keyword>
<protein>
    <recommendedName>
        <fullName>Ferredoxin-dependent glutamate synthase</fullName>
        <ecNumber>1.4.7.1</ecNumber>
    </recommendedName>
    <alternativeName>
        <fullName>Fd-GOGAT</fullName>
    </alternativeName>
</protein>
<gene>
    <name type="primary">gltB</name>
</gene>
<name>GLTB_PYRYE</name>
<evidence type="ECO:0000250" key="1"/>
<evidence type="ECO:0000255" key="2">
    <source>
        <dbReference type="PROSITE-ProRule" id="PRU00609"/>
    </source>
</evidence>
<evidence type="ECO:0000305" key="3"/>
<accession>Q1XDB2</accession>
<organism>
    <name type="scientific">Pyropia yezoensis</name>
    <name type="common">Susabi-nori</name>
    <name type="synonym">Porphyra yezoensis</name>
    <dbReference type="NCBI Taxonomy" id="2788"/>
    <lineage>
        <taxon>Eukaryota</taxon>
        <taxon>Rhodophyta</taxon>
        <taxon>Bangiophyceae</taxon>
        <taxon>Bangiales</taxon>
        <taxon>Bangiaceae</taxon>
        <taxon>Pyropia</taxon>
    </lineage>
</organism>
<proteinExistence type="inferred from homology"/>
<feature type="chain" id="PRO_0000277304" description="Ferredoxin-dependent glutamate synthase">
    <location>
        <begin position="1"/>
        <end position="1538"/>
    </location>
</feature>
<feature type="domain" description="Glutamine amidotransferase type-2" evidence="2">
    <location>
        <begin position="34"/>
        <end position="431"/>
    </location>
</feature>
<feature type="active site" description="For GATase activity" evidence="1">
    <location>
        <position position="34"/>
    </location>
</feature>
<feature type="binding site" evidence="1">
    <location>
        <begin position="1109"/>
        <end position="1166"/>
    </location>
    <ligand>
        <name>FMN</name>
        <dbReference type="ChEBI" id="CHEBI:58210"/>
    </ligand>
</feature>
<feature type="binding site" evidence="1">
    <location>
        <position position="1162"/>
    </location>
    <ligand>
        <name>[3Fe-4S] cluster</name>
        <dbReference type="ChEBI" id="CHEBI:21137"/>
    </ligand>
</feature>
<feature type="binding site" evidence="1">
    <location>
        <position position="1168"/>
    </location>
    <ligand>
        <name>[3Fe-4S] cluster</name>
        <dbReference type="ChEBI" id="CHEBI:21137"/>
    </ligand>
</feature>
<feature type="binding site" evidence="1">
    <location>
        <position position="1173"/>
    </location>
    <ligand>
        <name>[3Fe-4S] cluster</name>
        <dbReference type="ChEBI" id="CHEBI:21137"/>
    </ligand>
</feature>
<comment type="catalytic activity">
    <reaction>
        <text>2 oxidized [2Fe-2S]-[ferredoxin] + 2 L-glutamate = L-glutamine + 2 reduced [2Fe-2S]-[ferredoxin] + 2-oxoglutarate + 2 H(+)</text>
        <dbReference type="Rhea" id="RHEA:12128"/>
        <dbReference type="Rhea" id="RHEA-COMP:10000"/>
        <dbReference type="Rhea" id="RHEA-COMP:10001"/>
        <dbReference type="ChEBI" id="CHEBI:15378"/>
        <dbReference type="ChEBI" id="CHEBI:16810"/>
        <dbReference type="ChEBI" id="CHEBI:29985"/>
        <dbReference type="ChEBI" id="CHEBI:33737"/>
        <dbReference type="ChEBI" id="CHEBI:33738"/>
        <dbReference type="ChEBI" id="CHEBI:58359"/>
        <dbReference type="EC" id="1.4.7.1"/>
    </reaction>
</comment>
<comment type="cofactor">
    <cofactor evidence="1">
        <name>[3Fe-4S] cluster</name>
        <dbReference type="ChEBI" id="CHEBI:21137"/>
    </cofactor>
    <text evidence="1">Binds 1 [3Fe-4S] cluster.</text>
</comment>
<comment type="cofactor">
    <cofactor evidence="1">
        <name>FAD</name>
        <dbReference type="ChEBI" id="CHEBI:57692"/>
    </cofactor>
</comment>
<comment type="cofactor">
    <cofactor evidence="1">
        <name>FMN</name>
        <dbReference type="ChEBI" id="CHEBI:58210"/>
    </cofactor>
</comment>
<comment type="pathway">
    <text>Amino-acid biosynthesis; L-glutamate biosynthesis via GLT pathway; L-glutamate from 2-oxoglutarate and L-glutamine (ferredoxin route): step 1/1.</text>
</comment>
<comment type="pathway">
    <text>Energy metabolism; nitrogen metabolism.</text>
</comment>
<comment type="subunit">
    <text evidence="1">Monomer.</text>
</comment>
<comment type="subcellular location">
    <subcellularLocation>
        <location>Plastid</location>
        <location>Chloroplast stroma</location>
    </subcellularLocation>
</comment>
<comment type="similarity">
    <text evidence="3">Belongs to the glutamate synthase family.</text>
</comment>
<reference key="1">
    <citation type="submission" date="2003-11" db="EMBL/GenBank/DDBJ databases">
        <title>Whole genome sequence of Porphyra yezoensis chloroplast.</title>
        <authorList>
            <person name="Kunimoto M."/>
            <person name="Morishima K."/>
            <person name="Yoshikawa M."/>
            <person name="Fukuda S."/>
            <person name="Kobayashi T."/>
            <person name="Kobayashi M."/>
            <person name="Okazaki T."/>
            <person name="Ohara I."/>
            <person name="Nakayama I."/>
        </authorList>
    </citation>
    <scope>NUCLEOTIDE SEQUENCE [LARGE SCALE GENOMIC DNA]</scope>
    <source>
        <strain>U-51</strain>
    </source>
</reference>
<geneLocation type="chloroplast"/>
<sequence>MFNQKIVDQAPRKLTSRLTNSSSLISIEKERDACGVGFIADVNNVANHKIVVQALEALTCMEHRGACSADRDSGDGAGITTAIPWNLFQKSLQNQNIKFEQNDSVGVGMLFLPAHKLKESKLIIETVLKEENLEIIGWRLVPTVQEVLGKQAYLNKPHVEQVFCKSSNLSKDRLEQQLFLVRKKIEKYIGINGKDWAHEFYICSLSCYTIVYKGMMRSAVLGQFYQDLYHSEYTSSFAIYHRRFSTNTMPKWPLAQPMRFVSHNGEINTLLGNLNWMQSREPLLQSKVWKDRIHELKPITNKDNSDSANLDAAVELLIASGRSPEEALMILVPEAFQNQPDFANNTEISDFYEYYSGLQEPWDGPALVVFTNGKVIGATLDRNGLRPARYVITKDNLVIVSSESGVVQVEPGNVKSKGRLGPGQMISVDIFSHKILNNKEIKTSVTTKIPYGELLTDARQILEHKPFLSDQQVDIKKLMQLQTAFGYTNEDVELVIEHMASQAKEPTFCMGDDIPLSILSEKSHILYDYFKQRFAQVTNPAIDPLRESLVMSLAIQIGHKSNLLDDQPTLAKHIKLESPVINEGELNAIFESKLSCIRINTLFQLEDGPKNFKQQIQQLCENASQAILDGNNILVLSDKNNSLDSEKVSIPPLLAVGAVHHHLINKGLRQEASILVETAQCWSTHHFACLIGYGASAICPYLAFETARHWWSNPKTKMLMSKGRLPACNIQEAQANYKKAVEAGLLKILSKMGISLLSSYHGAQIFEILGLGSEVVNLAFKGTTSQIGGLSMIELGRETVNIHSKAFSEVKTKKLANYGFVQYRPGGEYHINNPEMSKALHQAVRGYNPEYYNNYQSLLQNRPPTALRDLLKLQSNRAPISIDEVESIEDILQKFCTGGMSLGALSRETHETLAIAMNRIGGKSNSGEGGEDPVRFKILNDVNSSGTSPLLPHLKGLKNGDTASSAIKQIASGRFGVTPEYLMNAKQLEIKIAQGAKPGEGGQLPGKKISPYIATLRKCKPGVPLISPPPHHDIYSIEDLSQLIFDLHQINPKAKISVKLVSEIGIGTIAAGVAKGNADIIQISGHDGGTGASPLSSIKHAGSPWELGLSEVHQLLAENQLRDRVTLRVDGGLRTGSDIVLAAIMGAEEFGFGTVAMIATGCIMARICHTNKCPVGVATQREELRARFSGVPEALVNFFLFIGNEVREILASLGYKSLDDITGQNHLLIKNTDINLTKTNGIQLDTLININNNTWTKFNSVHTNGPVMDDDILAIPEVSNAIKLETEITKHFKIANTNRTVGTRLSGIIAKNYGNTGFKGLIKLNFYGSAGQSFGAFLASGINLKLMGEANDYVGKGMNGGSIVIVPPAGTIYEDNNQVIIGNTCLYGATGGYLFAQGQAGERFAVRNSLAESVVEGVGDHACEYMTGGVIVVLGKAGRNVGAGMTGGLAYFLDEDENFIDRVNSEIVKIQRVITKAGEEQLKNLIENHAAKTGSLKAHTILEKWNSYLPQFWQVVPPSEANIDETNPTYSSNTIAAC</sequence>